<accession>A1SEK2</accession>
<name>RPOC_NOCSJ</name>
<sequence length="1290" mass="143494">MLDVNFFDQLQIGLATADDIRTWSHGEVKKPETINYRTLKPERDGLFCEKIFGPTRDWECYCGKYKRVRFKGIICERCGVEVTRSKVRRERMGHIELAAPVTHIWYFKGVPSRLGYLLDLAPKDLEKVIYFAAYMITAVDEDARHRDLSSLEGKVGLERERLEKRRDQSIDDRAKKLEEDLAALEAEGAKADQRRKVKDGAEREMKQLRDRAQREIDRLDEVWNTFKSLKVQDLMGDEMLYREMKNWFGKYFEGHMGATAIQKRLESFDIEAEVELLRDTIANGKGQRKVRALKRLKVVDAFRKTGNKPQGMVLDAVPVIPPDLRPMVQLDGGRFATSDLNDLYRRVINRNNRLKRLLDLGAPEIIVNNEKRMLQEAVDSLFDNGRRGRPVTGPGNRPLKSLSDMLKGKQGRFRQNLLGKRVDYSGRSVIVSGPQLKLHQCGLPKQMALELFKPFVMKRLVDLSHAQNIKSAKRMVERARPVVWDVLEEVITEHPVLLNRAPTLHRLGIQAFEPQLIEGKAIQIHPLVCSAFNADFDGDQMAVHLPLSAEAQAEARILMLSTNNILKPSDGRPVTMPTQDMIIGLFFLTTDRDGQPGDGRAFASPAEAIMAFDRGEISLQSKVRIRFTDIVPPLELGADWEQGQAVSLETTLGRALFNETLPADYPYVNYEVGKKALGAIVNDLAERYTKVEVAASLDALKDTGFHWATRSGVTVSIDDVTTPGDKADILSGYEAQAAKVQKQFERGLVTDEERRQELIEIWTQASNEVGKAMEANFDRANPIYMMVDSGASGNMNQIRQVAAMRGLVANPKGEIIPRPIKSNFREGLTVLEYFIATHGARKGLADTALRTADSGYLTRRLVDVSQDVIIREDDCGTERGLPKRIGERREDGTVVKAENAETAAYARTSAVDVAHPETGEVLVRAGEDLGDVKIGELISAGVEEVKVRSVLTCDAKTGTCAKCYGRSLATGKLVDIGEAVGIIAAQSIGEPGTQLTMRTFHTGGVASADDITQGLPRVVELFEARSPKGRSPISEAAGRVTIEESDKARKVLITPDDGSEVQEYPVSKRSRLLVGDGDHIEVGQMLTVGTPDPQDVLRILGVRRAQEHLVDEVQAVYRSQGVSIHDKHIEIIVRQMLRRITVIESGDTNLLPSDLVDRVRFEEENRRVVSEGGKPASGRPVLMGITKASLATESWLSAASFQETTRVLTDAAIHGRSDSLRGLKENVIIGKLIPAGTGLERYRNIRVEPTEEARAAAYSVTGYDSYDYEFGNGTGQAVALDDFDFGSYQN</sequence>
<evidence type="ECO:0000255" key="1">
    <source>
        <dbReference type="HAMAP-Rule" id="MF_01322"/>
    </source>
</evidence>
<feature type="chain" id="PRO_0000308868" description="DNA-directed RNA polymerase subunit beta'">
    <location>
        <begin position="1"/>
        <end position="1290"/>
    </location>
</feature>
<feature type="binding site" evidence="1">
    <location>
        <position position="60"/>
    </location>
    <ligand>
        <name>Zn(2+)</name>
        <dbReference type="ChEBI" id="CHEBI:29105"/>
        <label>1</label>
    </ligand>
</feature>
<feature type="binding site" evidence="1">
    <location>
        <position position="62"/>
    </location>
    <ligand>
        <name>Zn(2+)</name>
        <dbReference type="ChEBI" id="CHEBI:29105"/>
        <label>1</label>
    </ligand>
</feature>
<feature type="binding site" evidence="1">
    <location>
        <position position="75"/>
    </location>
    <ligand>
        <name>Zn(2+)</name>
        <dbReference type="ChEBI" id="CHEBI:29105"/>
        <label>1</label>
    </ligand>
</feature>
<feature type="binding site" evidence="1">
    <location>
        <position position="78"/>
    </location>
    <ligand>
        <name>Zn(2+)</name>
        <dbReference type="ChEBI" id="CHEBI:29105"/>
        <label>1</label>
    </ligand>
</feature>
<feature type="binding site" evidence="1">
    <location>
        <position position="535"/>
    </location>
    <ligand>
        <name>Mg(2+)</name>
        <dbReference type="ChEBI" id="CHEBI:18420"/>
    </ligand>
</feature>
<feature type="binding site" evidence="1">
    <location>
        <position position="537"/>
    </location>
    <ligand>
        <name>Mg(2+)</name>
        <dbReference type="ChEBI" id="CHEBI:18420"/>
    </ligand>
</feature>
<feature type="binding site" evidence="1">
    <location>
        <position position="539"/>
    </location>
    <ligand>
        <name>Mg(2+)</name>
        <dbReference type="ChEBI" id="CHEBI:18420"/>
    </ligand>
</feature>
<feature type="binding site" evidence="1">
    <location>
        <position position="875"/>
    </location>
    <ligand>
        <name>Zn(2+)</name>
        <dbReference type="ChEBI" id="CHEBI:29105"/>
        <label>2</label>
    </ligand>
</feature>
<feature type="binding site" evidence="1">
    <location>
        <position position="953"/>
    </location>
    <ligand>
        <name>Zn(2+)</name>
        <dbReference type="ChEBI" id="CHEBI:29105"/>
        <label>2</label>
    </ligand>
</feature>
<feature type="binding site" evidence="1">
    <location>
        <position position="960"/>
    </location>
    <ligand>
        <name>Zn(2+)</name>
        <dbReference type="ChEBI" id="CHEBI:29105"/>
        <label>2</label>
    </ligand>
</feature>
<feature type="binding site" evidence="1">
    <location>
        <position position="963"/>
    </location>
    <ligand>
        <name>Zn(2+)</name>
        <dbReference type="ChEBI" id="CHEBI:29105"/>
        <label>2</label>
    </ligand>
</feature>
<keyword id="KW-0240">DNA-directed RNA polymerase</keyword>
<keyword id="KW-0460">Magnesium</keyword>
<keyword id="KW-0479">Metal-binding</keyword>
<keyword id="KW-0548">Nucleotidyltransferase</keyword>
<keyword id="KW-1185">Reference proteome</keyword>
<keyword id="KW-0804">Transcription</keyword>
<keyword id="KW-0808">Transferase</keyword>
<keyword id="KW-0862">Zinc</keyword>
<proteinExistence type="inferred from homology"/>
<comment type="function">
    <text evidence="1">DNA-dependent RNA polymerase catalyzes the transcription of DNA into RNA using the four ribonucleoside triphosphates as substrates.</text>
</comment>
<comment type="catalytic activity">
    <reaction evidence="1">
        <text>RNA(n) + a ribonucleoside 5'-triphosphate = RNA(n+1) + diphosphate</text>
        <dbReference type="Rhea" id="RHEA:21248"/>
        <dbReference type="Rhea" id="RHEA-COMP:14527"/>
        <dbReference type="Rhea" id="RHEA-COMP:17342"/>
        <dbReference type="ChEBI" id="CHEBI:33019"/>
        <dbReference type="ChEBI" id="CHEBI:61557"/>
        <dbReference type="ChEBI" id="CHEBI:140395"/>
        <dbReference type="EC" id="2.7.7.6"/>
    </reaction>
</comment>
<comment type="cofactor">
    <cofactor evidence="1">
        <name>Mg(2+)</name>
        <dbReference type="ChEBI" id="CHEBI:18420"/>
    </cofactor>
    <text evidence="1">Binds 1 Mg(2+) ion per subunit.</text>
</comment>
<comment type="cofactor">
    <cofactor evidence="1">
        <name>Zn(2+)</name>
        <dbReference type="ChEBI" id="CHEBI:29105"/>
    </cofactor>
    <text evidence="1">Binds 2 Zn(2+) ions per subunit.</text>
</comment>
<comment type="subunit">
    <text evidence="1">The RNAP catalytic core consists of 2 alpha, 1 beta, 1 beta' and 1 omega subunit. When a sigma factor is associated with the core the holoenzyme is formed, which can initiate transcription.</text>
</comment>
<comment type="similarity">
    <text evidence="1">Belongs to the RNA polymerase beta' chain family.</text>
</comment>
<gene>
    <name evidence="1" type="primary">rpoC</name>
    <name type="ordered locus">Noca_0712</name>
</gene>
<organism>
    <name type="scientific">Nocardioides sp. (strain ATCC BAA-499 / JS614)</name>
    <dbReference type="NCBI Taxonomy" id="196162"/>
    <lineage>
        <taxon>Bacteria</taxon>
        <taxon>Bacillati</taxon>
        <taxon>Actinomycetota</taxon>
        <taxon>Actinomycetes</taxon>
        <taxon>Propionibacteriales</taxon>
        <taxon>Nocardioidaceae</taxon>
        <taxon>Nocardioides</taxon>
    </lineage>
</organism>
<protein>
    <recommendedName>
        <fullName evidence="1">DNA-directed RNA polymerase subunit beta'</fullName>
        <shortName evidence="1">RNAP subunit beta'</shortName>
        <ecNumber evidence="1">2.7.7.6</ecNumber>
    </recommendedName>
    <alternativeName>
        <fullName evidence="1">RNA polymerase subunit beta'</fullName>
    </alternativeName>
    <alternativeName>
        <fullName evidence="1">Transcriptase subunit beta'</fullName>
    </alternativeName>
</protein>
<reference key="1">
    <citation type="submission" date="2006-12" db="EMBL/GenBank/DDBJ databases">
        <title>Complete sequence of chromosome 1 of Nocardioides sp. JS614.</title>
        <authorList>
            <person name="Copeland A."/>
            <person name="Lucas S."/>
            <person name="Lapidus A."/>
            <person name="Barry K."/>
            <person name="Detter J.C."/>
            <person name="Glavina del Rio T."/>
            <person name="Hammon N."/>
            <person name="Israni S."/>
            <person name="Dalin E."/>
            <person name="Tice H."/>
            <person name="Pitluck S."/>
            <person name="Thompson L.S."/>
            <person name="Brettin T."/>
            <person name="Bruce D."/>
            <person name="Han C."/>
            <person name="Tapia R."/>
            <person name="Schmutz J."/>
            <person name="Larimer F."/>
            <person name="Land M."/>
            <person name="Hauser L."/>
            <person name="Kyrpides N."/>
            <person name="Kim E."/>
            <person name="Mattes T."/>
            <person name="Gossett J."/>
            <person name="Richardson P."/>
        </authorList>
    </citation>
    <scope>NUCLEOTIDE SEQUENCE [LARGE SCALE GENOMIC DNA]</scope>
    <source>
        <strain>ATCC BAA-499 / JS614</strain>
    </source>
</reference>
<dbReference type="EC" id="2.7.7.6" evidence="1"/>
<dbReference type="EMBL" id="CP000509">
    <property type="protein sequence ID" value="ABL80237.1"/>
    <property type="molecule type" value="Genomic_DNA"/>
</dbReference>
<dbReference type="RefSeq" id="WP_011754186.1">
    <property type="nucleotide sequence ID" value="NC_008699.1"/>
</dbReference>
<dbReference type="SMR" id="A1SEK2"/>
<dbReference type="STRING" id="196162.Noca_0712"/>
<dbReference type="KEGG" id="nca:Noca_0712"/>
<dbReference type="eggNOG" id="COG0086">
    <property type="taxonomic scope" value="Bacteria"/>
</dbReference>
<dbReference type="HOGENOM" id="CLU_000524_3_1_11"/>
<dbReference type="OrthoDB" id="9815296at2"/>
<dbReference type="Proteomes" id="UP000000640">
    <property type="component" value="Chromosome"/>
</dbReference>
<dbReference type="GO" id="GO:0000428">
    <property type="term" value="C:DNA-directed RNA polymerase complex"/>
    <property type="evidence" value="ECO:0007669"/>
    <property type="project" value="UniProtKB-KW"/>
</dbReference>
<dbReference type="GO" id="GO:0003677">
    <property type="term" value="F:DNA binding"/>
    <property type="evidence" value="ECO:0007669"/>
    <property type="project" value="UniProtKB-UniRule"/>
</dbReference>
<dbReference type="GO" id="GO:0003899">
    <property type="term" value="F:DNA-directed RNA polymerase activity"/>
    <property type="evidence" value="ECO:0007669"/>
    <property type="project" value="UniProtKB-UniRule"/>
</dbReference>
<dbReference type="GO" id="GO:0000287">
    <property type="term" value="F:magnesium ion binding"/>
    <property type="evidence" value="ECO:0007669"/>
    <property type="project" value="UniProtKB-UniRule"/>
</dbReference>
<dbReference type="GO" id="GO:0008270">
    <property type="term" value="F:zinc ion binding"/>
    <property type="evidence" value="ECO:0007669"/>
    <property type="project" value="UniProtKB-UniRule"/>
</dbReference>
<dbReference type="GO" id="GO:0006351">
    <property type="term" value="P:DNA-templated transcription"/>
    <property type="evidence" value="ECO:0007669"/>
    <property type="project" value="UniProtKB-UniRule"/>
</dbReference>
<dbReference type="CDD" id="cd02655">
    <property type="entry name" value="RNAP_beta'_C"/>
    <property type="match status" value="1"/>
</dbReference>
<dbReference type="CDD" id="cd01609">
    <property type="entry name" value="RNAP_beta'_N"/>
    <property type="match status" value="1"/>
</dbReference>
<dbReference type="FunFam" id="1.10.150.390:FF:000002">
    <property type="entry name" value="DNA-directed RNA polymerase subunit beta"/>
    <property type="match status" value="1"/>
</dbReference>
<dbReference type="FunFam" id="1.10.40.90:FF:000001">
    <property type="entry name" value="DNA-directed RNA polymerase subunit beta"/>
    <property type="match status" value="1"/>
</dbReference>
<dbReference type="FunFam" id="4.10.860.120:FF:000001">
    <property type="entry name" value="DNA-directed RNA polymerase subunit beta"/>
    <property type="match status" value="1"/>
</dbReference>
<dbReference type="Gene3D" id="1.10.132.30">
    <property type="match status" value="1"/>
</dbReference>
<dbReference type="Gene3D" id="1.10.150.390">
    <property type="match status" value="1"/>
</dbReference>
<dbReference type="Gene3D" id="1.10.1790.20">
    <property type="match status" value="1"/>
</dbReference>
<dbReference type="Gene3D" id="1.10.40.90">
    <property type="match status" value="1"/>
</dbReference>
<dbReference type="Gene3D" id="2.40.40.20">
    <property type="match status" value="1"/>
</dbReference>
<dbReference type="Gene3D" id="2.40.50.100">
    <property type="match status" value="1"/>
</dbReference>
<dbReference type="Gene3D" id="4.10.860.120">
    <property type="entry name" value="RNA polymerase II, clamp domain"/>
    <property type="match status" value="1"/>
</dbReference>
<dbReference type="Gene3D" id="1.10.274.100">
    <property type="entry name" value="RNA polymerase Rpb1, domain 3"/>
    <property type="match status" value="1"/>
</dbReference>
<dbReference type="HAMAP" id="MF_01322">
    <property type="entry name" value="RNApol_bact_RpoC"/>
    <property type="match status" value="1"/>
</dbReference>
<dbReference type="InterPro" id="IPR045867">
    <property type="entry name" value="DNA-dir_RpoC_beta_prime"/>
</dbReference>
<dbReference type="InterPro" id="IPR012754">
    <property type="entry name" value="DNA-dir_RpoC_beta_prime_bact"/>
</dbReference>
<dbReference type="InterPro" id="IPR000722">
    <property type="entry name" value="RNA_pol_asu"/>
</dbReference>
<dbReference type="InterPro" id="IPR006592">
    <property type="entry name" value="RNA_pol_N"/>
</dbReference>
<dbReference type="InterPro" id="IPR007080">
    <property type="entry name" value="RNA_pol_Rpb1_1"/>
</dbReference>
<dbReference type="InterPro" id="IPR007066">
    <property type="entry name" value="RNA_pol_Rpb1_3"/>
</dbReference>
<dbReference type="InterPro" id="IPR042102">
    <property type="entry name" value="RNA_pol_Rpb1_3_sf"/>
</dbReference>
<dbReference type="InterPro" id="IPR007083">
    <property type="entry name" value="RNA_pol_Rpb1_4"/>
</dbReference>
<dbReference type="InterPro" id="IPR007081">
    <property type="entry name" value="RNA_pol_Rpb1_5"/>
</dbReference>
<dbReference type="InterPro" id="IPR044893">
    <property type="entry name" value="RNA_pol_Rpb1_clamp_domain"/>
</dbReference>
<dbReference type="InterPro" id="IPR038120">
    <property type="entry name" value="Rpb1_funnel_sf"/>
</dbReference>
<dbReference type="NCBIfam" id="NF011498">
    <property type="entry name" value="PRK14906.1"/>
    <property type="match status" value="1"/>
</dbReference>
<dbReference type="NCBIfam" id="TIGR02386">
    <property type="entry name" value="rpoC_TIGR"/>
    <property type="match status" value="1"/>
</dbReference>
<dbReference type="PANTHER" id="PTHR19376">
    <property type="entry name" value="DNA-DIRECTED RNA POLYMERASE"/>
    <property type="match status" value="1"/>
</dbReference>
<dbReference type="PANTHER" id="PTHR19376:SF54">
    <property type="entry name" value="DNA-DIRECTED RNA POLYMERASE SUBUNIT BETA"/>
    <property type="match status" value="1"/>
</dbReference>
<dbReference type="Pfam" id="PF04997">
    <property type="entry name" value="RNA_pol_Rpb1_1"/>
    <property type="match status" value="1"/>
</dbReference>
<dbReference type="Pfam" id="PF00623">
    <property type="entry name" value="RNA_pol_Rpb1_2"/>
    <property type="match status" value="2"/>
</dbReference>
<dbReference type="Pfam" id="PF04983">
    <property type="entry name" value="RNA_pol_Rpb1_3"/>
    <property type="match status" value="1"/>
</dbReference>
<dbReference type="Pfam" id="PF05000">
    <property type="entry name" value="RNA_pol_Rpb1_4"/>
    <property type="match status" value="1"/>
</dbReference>
<dbReference type="Pfam" id="PF04998">
    <property type="entry name" value="RNA_pol_Rpb1_5"/>
    <property type="match status" value="1"/>
</dbReference>
<dbReference type="SMART" id="SM00663">
    <property type="entry name" value="RPOLA_N"/>
    <property type="match status" value="1"/>
</dbReference>
<dbReference type="SUPFAM" id="SSF64484">
    <property type="entry name" value="beta and beta-prime subunits of DNA dependent RNA-polymerase"/>
    <property type="match status" value="1"/>
</dbReference>